<comment type="function">
    <text evidence="1">Acts as a chaperone.</text>
</comment>
<comment type="induction">
    <text evidence="1">By stress conditions e.g. heat shock.</text>
</comment>
<comment type="similarity">
    <text evidence="1">Belongs to the heat shock protein 70 family.</text>
</comment>
<sequence length="637" mass="69839">MGKIIGIDLGTTNSCVAIIEGNKPRVLENSEGDRTTPSIIAYTQDGEILVGQPAKRQSVTNPKNTLFAIKRLIGRRFQDTEVQRDVNIMPYKIISADNGDAWLDVKGQKMAPPQVSAEILKKMKKTAEDYLGEQISEAVITVPAYFNDAQRQATKDSGRIAGLEVKRIINEPTAAALAYGLDKETRGNRTIAVYDLGGGTFDISIIEIDDVDGEKTFEVLSTNGDTHLGGEDFDSLLINYLADEFKKDQRINLYNDPLAMQRLKEAAEKAKIELSASHQTDVNLPYITADNTGPKHMNIRVTRAKLESLVEDLVNRTMEPLKVALKDANLSVSNINDVILVGGQTRMPLVQKKVSEFFRKEPRRDVNPDEAVAIGAAVQGGVLSGDVKDVLLLDVTPLSLGIETMGGVMTSLIAKNTTIPTKHSQIFSTAEDNQSAVTIHVLQGERKRASDNKSLGQFNLDGIAAAMRGIPQIEVTFDIDADGILHVSAKDKNSGREQKITIKASSGLNEEEINKMVQEAEANAESDRKFEELVQIRNQADHLLHSTKKQLTEVGDNISLDDKSAIEGALKELESVIKKEDKNEIESKIQSLIKVSGKLLEASQKHQEQSKSQSSNSTSDPNGEVVDAEFEEIKNKK</sequence>
<keyword id="KW-0067">ATP-binding</keyword>
<keyword id="KW-0143">Chaperone</keyword>
<keyword id="KW-0547">Nucleotide-binding</keyword>
<keyword id="KW-0597">Phosphoprotein</keyword>
<keyword id="KW-1185">Reference proteome</keyword>
<keyword id="KW-0346">Stress response</keyword>
<evidence type="ECO:0000255" key="1">
    <source>
        <dbReference type="HAMAP-Rule" id="MF_00332"/>
    </source>
</evidence>
<evidence type="ECO:0000256" key="2">
    <source>
        <dbReference type="SAM" id="MobiDB-lite"/>
    </source>
</evidence>
<proteinExistence type="inferred from homology"/>
<feature type="chain" id="PRO_0000225941" description="Chaperone protein DnaK">
    <location>
        <begin position="1"/>
        <end position="637"/>
    </location>
</feature>
<feature type="region of interest" description="Disordered" evidence="2">
    <location>
        <begin position="600"/>
        <end position="637"/>
    </location>
</feature>
<feature type="compositionally biased region" description="Low complexity" evidence="2">
    <location>
        <begin position="610"/>
        <end position="619"/>
    </location>
</feature>
<feature type="modified residue" description="Phosphothreonine; by autocatalysis" evidence="1">
    <location>
        <position position="200"/>
    </location>
</feature>
<gene>
    <name evidence="1" type="primary">dnaK</name>
    <name type="ordered locus">BPEN_118</name>
</gene>
<organism>
    <name type="scientific">Blochmanniella pennsylvanica (strain BPEN)</name>
    <dbReference type="NCBI Taxonomy" id="291272"/>
    <lineage>
        <taxon>Bacteria</taxon>
        <taxon>Pseudomonadati</taxon>
        <taxon>Pseudomonadota</taxon>
        <taxon>Gammaproteobacteria</taxon>
        <taxon>Enterobacterales</taxon>
        <taxon>Enterobacteriaceae</taxon>
        <taxon>ant endosymbionts</taxon>
        <taxon>Candidatus Blochmanniella</taxon>
    </lineage>
</organism>
<protein>
    <recommendedName>
        <fullName evidence="1">Chaperone protein DnaK</fullName>
    </recommendedName>
    <alternativeName>
        <fullName evidence="1">HSP70</fullName>
    </alternativeName>
    <alternativeName>
        <fullName evidence="1">Heat shock 70 kDa protein</fullName>
    </alternativeName>
    <alternativeName>
        <fullName evidence="1">Heat shock protein 70</fullName>
    </alternativeName>
</protein>
<dbReference type="EMBL" id="CP000016">
    <property type="protein sequence ID" value="AAZ40758.1"/>
    <property type="molecule type" value="Genomic_DNA"/>
</dbReference>
<dbReference type="RefSeq" id="WP_011282665.1">
    <property type="nucleotide sequence ID" value="NC_007292.1"/>
</dbReference>
<dbReference type="SMR" id="Q493S7"/>
<dbReference type="STRING" id="291272.BPEN_118"/>
<dbReference type="KEGG" id="bpn:BPEN_118"/>
<dbReference type="eggNOG" id="COG0443">
    <property type="taxonomic scope" value="Bacteria"/>
</dbReference>
<dbReference type="HOGENOM" id="CLU_005965_2_1_6"/>
<dbReference type="OrthoDB" id="9766019at2"/>
<dbReference type="Proteomes" id="UP000007794">
    <property type="component" value="Chromosome"/>
</dbReference>
<dbReference type="GO" id="GO:0005524">
    <property type="term" value="F:ATP binding"/>
    <property type="evidence" value="ECO:0007669"/>
    <property type="project" value="UniProtKB-UniRule"/>
</dbReference>
<dbReference type="GO" id="GO:0140662">
    <property type="term" value="F:ATP-dependent protein folding chaperone"/>
    <property type="evidence" value="ECO:0007669"/>
    <property type="project" value="InterPro"/>
</dbReference>
<dbReference type="GO" id="GO:0051082">
    <property type="term" value="F:unfolded protein binding"/>
    <property type="evidence" value="ECO:0007669"/>
    <property type="project" value="InterPro"/>
</dbReference>
<dbReference type="CDD" id="cd10234">
    <property type="entry name" value="ASKHA_NBD_HSP70_DnaK-like"/>
    <property type="match status" value="1"/>
</dbReference>
<dbReference type="FunFam" id="2.60.34.10:FF:000014">
    <property type="entry name" value="Chaperone protein DnaK HSP70"/>
    <property type="match status" value="1"/>
</dbReference>
<dbReference type="FunFam" id="3.30.30.30:FF:000003">
    <property type="entry name" value="Heat shock protein 9"/>
    <property type="match status" value="1"/>
</dbReference>
<dbReference type="FunFam" id="1.20.1270.10:FF:000001">
    <property type="entry name" value="Molecular chaperone DnaK"/>
    <property type="match status" value="1"/>
</dbReference>
<dbReference type="FunFam" id="3.30.420.40:FF:000004">
    <property type="entry name" value="Molecular chaperone DnaK"/>
    <property type="match status" value="1"/>
</dbReference>
<dbReference type="FunFam" id="3.90.640.10:FF:000003">
    <property type="entry name" value="Molecular chaperone DnaK"/>
    <property type="match status" value="1"/>
</dbReference>
<dbReference type="Gene3D" id="1.20.1270.10">
    <property type="match status" value="1"/>
</dbReference>
<dbReference type="Gene3D" id="3.30.420.40">
    <property type="match status" value="2"/>
</dbReference>
<dbReference type="Gene3D" id="3.90.640.10">
    <property type="entry name" value="Actin, Chain A, domain 4"/>
    <property type="match status" value="1"/>
</dbReference>
<dbReference type="Gene3D" id="2.60.34.10">
    <property type="entry name" value="Substrate Binding Domain Of DNAk, Chain A, domain 1"/>
    <property type="match status" value="1"/>
</dbReference>
<dbReference type="HAMAP" id="MF_00332">
    <property type="entry name" value="DnaK"/>
    <property type="match status" value="1"/>
</dbReference>
<dbReference type="InterPro" id="IPR043129">
    <property type="entry name" value="ATPase_NBD"/>
</dbReference>
<dbReference type="InterPro" id="IPR012725">
    <property type="entry name" value="Chaperone_DnaK"/>
</dbReference>
<dbReference type="InterPro" id="IPR018181">
    <property type="entry name" value="Heat_shock_70_CS"/>
</dbReference>
<dbReference type="InterPro" id="IPR029048">
    <property type="entry name" value="HSP70_C_sf"/>
</dbReference>
<dbReference type="InterPro" id="IPR029047">
    <property type="entry name" value="HSP70_peptide-bd_sf"/>
</dbReference>
<dbReference type="InterPro" id="IPR013126">
    <property type="entry name" value="Hsp_70_fam"/>
</dbReference>
<dbReference type="NCBIfam" id="NF001413">
    <property type="entry name" value="PRK00290.1"/>
    <property type="match status" value="1"/>
</dbReference>
<dbReference type="NCBIfam" id="NF003520">
    <property type="entry name" value="PRK05183.1"/>
    <property type="match status" value="1"/>
</dbReference>
<dbReference type="NCBIfam" id="TIGR02350">
    <property type="entry name" value="prok_dnaK"/>
    <property type="match status" value="1"/>
</dbReference>
<dbReference type="PANTHER" id="PTHR19375">
    <property type="entry name" value="HEAT SHOCK PROTEIN 70KDA"/>
    <property type="match status" value="1"/>
</dbReference>
<dbReference type="Pfam" id="PF00012">
    <property type="entry name" value="HSP70"/>
    <property type="match status" value="1"/>
</dbReference>
<dbReference type="PRINTS" id="PR00301">
    <property type="entry name" value="HEATSHOCK70"/>
</dbReference>
<dbReference type="SUPFAM" id="SSF53067">
    <property type="entry name" value="Actin-like ATPase domain"/>
    <property type="match status" value="2"/>
</dbReference>
<dbReference type="SUPFAM" id="SSF100934">
    <property type="entry name" value="Heat shock protein 70kD (HSP70), C-terminal subdomain"/>
    <property type="match status" value="1"/>
</dbReference>
<dbReference type="SUPFAM" id="SSF100920">
    <property type="entry name" value="Heat shock protein 70kD (HSP70), peptide-binding domain"/>
    <property type="match status" value="1"/>
</dbReference>
<dbReference type="PROSITE" id="PS00297">
    <property type="entry name" value="HSP70_1"/>
    <property type="match status" value="1"/>
</dbReference>
<dbReference type="PROSITE" id="PS00329">
    <property type="entry name" value="HSP70_2"/>
    <property type="match status" value="1"/>
</dbReference>
<dbReference type="PROSITE" id="PS01036">
    <property type="entry name" value="HSP70_3"/>
    <property type="match status" value="1"/>
</dbReference>
<name>DNAK_BLOPB</name>
<accession>Q493S7</accession>
<reference key="1">
    <citation type="journal article" date="2005" name="Genome Res.">
        <title>Genome sequence of Blochmannia pennsylvanicus indicates parallel evolutionary trends among bacterial mutualists of insects.</title>
        <authorList>
            <person name="Degnan P.H."/>
            <person name="Lazarus A.B."/>
            <person name="Wernegreen J.J."/>
        </authorList>
    </citation>
    <scope>NUCLEOTIDE SEQUENCE [LARGE SCALE GENOMIC DNA]</scope>
    <source>
        <strain>BPEN</strain>
    </source>
</reference>